<reference key="1">
    <citation type="journal article" date="2006" name="BMC Biol.">
        <title>The complete chloroplast DNA sequence of the green alga Oltmannsiellopsis viridis reveals a distinctive quadripartite architecture in the chloroplast genome of early diverging ulvophytes.</title>
        <authorList>
            <person name="Pombert J.-F."/>
            <person name="Lemieux C."/>
            <person name="Turmel M."/>
        </authorList>
    </citation>
    <scope>NUCLEOTIDE SEQUENCE [LARGE SCALE GENOMIC DNA]</scope>
</reference>
<proteinExistence type="inferred from homology"/>
<sequence>MTISPPEREAKKVKIVVDRNPVETSLEKWAKPGHFSRALSKGPTTTTWIWNLHADAHDFDSHTSDLEDISRKVFSAHFGQLGIIFIWLSGMYFHGARFSNYEAWLSDPTHIKPSAQVVWPVVGQEILNGDVGGGFQGIQITSGFFQLWRASGITSELQLYATAIGGLVMAAAMFFAGWFHYHKAAPKLEWFQNVESMMNHHLAGLLGLGSLAWAGHQIHISLPINKLLDAGVDPKEIPLPHELMLNRELMAQLYPSFAKGLAPFFTLNWGEYSDFLTFQGGLNPVTGGLWLSDEAHHHLAIAVLFLIAGHQYRTNWGIGHSMKEILEAHKGPFTGEGHKGLYEILTTSWHAQLAINLAMLGSLSIIVAHHMYAMPPYPYLATDYGTQLSLFTHHVWIGGFCIVGAGAHAAIFMVRDYDPTNNYNNLLDRVIRHRDAIISHLNWVCIFLGFHSFGLYIHNDTMSALGRPQDMFSDTAIQLQPVFAQWVQNTHFLAPQLTAPNALAATSVSWGGDVVAVGGKVAMMPIALGTSDFLVHHIHAFTIHVTVLILLKGVLYSRSSRLIPDKANLGFRFPCDGPGRGGTCQVSAWDHVFLGLFWMYNSLSIVIFHFSWKMQSDVWGSVTASGVTHITGGNFAASANTINGWLRDFLWAQSSQVIQSYGSALSAYGLMFLGAHFVWAFSLMFLFSGRGYWQELIESIVWAHNKLKVAPAIQPRALSITQGRAVGVAHYLLGGIATTWSFFLARIISVG</sequence>
<evidence type="ECO:0000255" key="1">
    <source>
        <dbReference type="HAMAP-Rule" id="MF_00458"/>
    </source>
</evidence>
<dbReference type="EC" id="1.97.1.12" evidence="1"/>
<dbReference type="EMBL" id="DQ291132">
    <property type="protein sequence ID" value="ABB81947.1"/>
    <property type="molecule type" value="Genomic_DNA"/>
</dbReference>
<dbReference type="RefSeq" id="YP_635879.1">
    <property type="nucleotide sequence ID" value="NC_008099.1"/>
</dbReference>
<dbReference type="SMR" id="Q20EW6"/>
<dbReference type="GeneID" id="4100126"/>
<dbReference type="GO" id="GO:0009535">
    <property type="term" value="C:chloroplast thylakoid membrane"/>
    <property type="evidence" value="ECO:0007669"/>
    <property type="project" value="UniProtKB-SubCell"/>
</dbReference>
<dbReference type="GO" id="GO:0009522">
    <property type="term" value="C:photosystem I"/>
    <property type="evidence" value="ECO:0007669"/>
    <property type="project" value="UniProtKB-KW"/>
</dbReference>
<dbReference type="GO" id="GO:0051539">
    <property type="term" value="F:4 iron, 4 sulfur cluster binding"/>
    <property type="evidence" value="ECO:0007669"/>
    <property type="project" value="UniProtKB-KW"/>
</dbReference>
<dbReference type="GO" id="GO:0016168">
    <property type="term" value="F:chlorophyll binding"/>
    <property type="evidence" value="ECO:0007669"/>
    <property type="project" value="UniProtKB-KW"/>
</dbReference>
<dbReference type="GO" id="GO:0009055">
    <property type="term" value="F:electron transfer activity"/>
    <property type="evidence" value="ECO:0007669"/>
    <property type="project" value="UniProtKB-UniRule"/>
</dbReference>
<dbReference type="GO" id="GO:0000287">
    <property type="term" value="F:magnesium ion binding"/>
    <property type="evidence" value="ECO:0007669"/>
    <property type="project" value="UniProtKB-UniRule"/>
</dbReference>
<dbReference type="GO" id="GO:0016491">
    <property type="term" value="F:oxidoreductase activity"/>
    <property type="evidence" value="ECO:0007669"/>
    <property type="project" value="UniProtKB-KW"/>
</dbReference>
<dbReference type="GO" id="GO:0015979">
    <property type="term" value="P:photosynthesis"/>
    <property type="evidence" value="ECO:0007669"/>
    <property type="project" value="UniProtKB-UniRule"/>
</dbReference>
<dbReference type="FunFam" id="1.20.1130.10:FF:000001">
    <property type="entry name" value="Photosystem I P700 chlorophyll a apoprotein A2"/>
    <property type="match status" value="1"/>
</dbReference>
<dbReference type="Gene3D" id="1.20.1130.10">
    <property type="entry name" value="Photosystem I PsaA/PsaB"/>
    <property type="match status" value="1"/>
</dbReference>
<dbReference type="HAMAP" id="MF_00458">
    <property type="entry name" value="PSI_PsaA"/>
    <property type="match status" value="1"/>
</dbReference>
<dbReference type="InterPro" id="IPR006243">
    <property type="entry name" value="PSI_PsaA"/>
</dbReference>
<dbReference type="InterPro" id="IPR001280">
    <property type="entry name" value="PSI_PsaA/B"/>
</dbReference>
<dbReference type="InterPro" id="IPR020586">
    <property type="entry name" value="PSI_PsaA/B_CS"/>
</dbReference>
<dbReference type="InterPro" id="IPR036408">
    <property type="entry name" value="PSI_PsaA/B_sf"/>
</dbReference>
<dbReference type="NCBIfam" id="TIGR01335">
    <property type="entry name" value="psaA"/>
    <property type="match status" value="1"/>
</dbReference>
<dbReference type="PANTHER" id="PTHR30128">
    <property type="entry name" value="OUTER MEMBRANE PROTEIN, OMPA-RELATED"/>
    <property type="match status" value="1"/>
</dbReference>
<dbReference type="PANTHER" id="PTHR30128:SF19">
    <property type="entry name" value="PHOTOSYSTEM I P700 CHLOROPHYLL A APOPROTEIN A1-RELATED"/>
    <property type="match status" value="1"/>
</dbReference>
<dbReference type="Pfam" id="PF00223">
    <property type="entry name" value="PsaA_PsaB"/>
    <property type="match status" value="1"/>
</dbReference>
<dbReference type="PIRSF" id="PIRSF002905">
    <property type="entry name" value="PSI_A"/>
    <property type="match status" value="1"/>
</dbReference>
<dbReference type="PRINTS" id="PR00257">
    <property type="entry name" value="PHOTSYSPSAAB"/>
</dbReference>
<dbReference type="SUPFAM" id="SSF81558">
    <property type="entry name" value="Photosystem I subunits PsaA/PsaB"/>
    <property type="match status" value="1"/>
</dbReference>
<dbReference type="PROSITE" id="PS00419">
    <property type="entry name" value="PHOTOSYSTEM_I_PSAAB"/>
    <property type="match status" value="1"/>
</dbReference>
<name>PSAA_OLTVI</name>
<geneLocation type="chloroplast"/>
<protein>
    <recommendedName>
        <fullName evidence="1">Photosystem I P700 chlorophyll a apoprotein A1</fullName>
        <ecNumber evidence="1">1.97.1.12</ecNumber>
    </recommendedName>
    <alternativeName>
        <fullName evidence="1">PSI-A</fullName>
    </alternativeName>
    <alternativeName>
        <fullName evidence="1">PsaA</fullName>
    </alternativeName>
</protein>
<comment type="function">
    <text>PsaA and PsaB bind P700, the primary electron donor of photosystem I (PSI), as well as the electron acceptors A0, A1 and FX. PSI is a plastocyanin/cytochrome c6-ferredoxin oxidoreductase, converting photonic excitation into a charge separation, which transfers an electron from the donor P700 chlorophyll pair to the spectroscopically characterized acceptors A0, A1, FX, FA and FB in turn. Oxidized P700 is reduced on the lumenal side of the thylakoid membrane by plastocyanin or cytochrome c6.</text>
</comment>
<comment type="catalytic activity">
    <reaction evidence="1">
        <text>reduced [plastocyanin] + hnu + oxidized [2Fe-2S]-[ferredoxin] = oxidized [plastocyanin] + reduced [2Fe-2S]-[ferredoxin]</text>
        <dbReference type="Rhea" id="RHEA:30407"/>
        <dbReference type="Rhea" id="RHEA-COMP:10000"/>
        <dbReference type="Rhea" id="RHEA-COMP:10001"/>
        <dbReference type="Rhea" id="RHEA-COMP:10039"/>
        <dbReference type="Rhea" id="RHEA-COMP:10040"/>
        <dbReference type="ChEBI" id="CHEBI:29036"/>
        <dbReference type="ChEBI" id="CHEBI:30212"/>
        <dbReference type="ChEBI" id="CHEBI:33737"/>
        <dbReference type="ChEBI" id="CHEBI:33738"/>
        <dbReference type="ChEBI" id="CHEBI:49552"/>
        <dbReference type="EC" id="1.97.1.12"/>
    </reaction>
</comment>
<comment type="cofactor">
    <text evidence="1">P700 is a chlorophyll a/chlorophyll a' dimer, A0 is one or more chlorophyll a, A1 is one or both phylloquinones and FX is a shared 4Fe-4S iron-sulfur center.</text>
</comment>
<comment type="subunit">
    <text evidence="1">The PsaA/B heterodimer binds the P700 chlorophyll special pair and subsequent electron acceptors. PSI consists of a core antenna complex that captures photons, and an electron transfer chain that converts photonic excitation into a charge separation. The eukaryotic PSI reaction center is composed of at least 11 subunits.</text>
</comment>
<comment type="subcellular location">
    <subcellularLocation>
        <location evidence="1">Plastid</location>
        <location evidence="1">Chloroplast thylakoid membrane</location>
        <topology evidence="1">Multi-pass membrane protein</topology>
    </subcellularLocation>
</comment>
<comment type="similarity">
    <text evidence="1">Belongs to the PsaA/PsaB family.</text>
</comment>
<keyword id="KW-0004">4Fe-4S</keyword>
<keyword id="KW-0148">Chlorophyll</keyword>
<keyword id="KW-0150">Chloroplast</keyword>
<keyword id="KW-0157">Chromophore</keyword>
<keyword id="KW-0249">Electron transport</keyword>
<keyword id="KW-0408">Iron</keyword>
<keyword id="KW-0411">Iron-sulfur</keyword>
<keyword id="KW-0460">Magnesium</keyword>
<keyword id="KW-0472">Membrane</keyword>
<keyword id="KW-0479">Metal-binding</keyword>
<keyword id="KW-0560">Oxidoreductase</keyword>
<keyword id="KW-0602">Photosynthesis</keyword>
<keyword id="KW-0603">Photosystem I</keyword>
<keyword id="KW-0934">Plastid</keyword>
<keyword id="KW-0793">Thylakoid</keyword>
<keyword id="KW-0812">Transmembrane</keyword>
<keyword id="KW-1133">Transmembrane helix</keyword>
<keyword id="KW-0813">Transport</keyword>
<gene>
    <name evidence="1" type="primary">psaA</name>
</gene>
<organism>
    <name type="scientific">Oltmannsiellopsis viridis</name>
    <name type="common">Marine flagellate</name>
    <name type="synonym">Oltmannsiella viridis</name>
    <dbReference type="NCBI Taxonomy" id="51324"/>
    <lineage>
        <taxon>Eukaryota</taxon>
        <taxon>Viridiplantae</taxon>
        <taxon>Chlorophyta</taxon>
        <taxon>Ulvophyceae</taxon>
        <taxon>Oltmannsiellopsidales</taxon>
        <taxon>Oltmannsiellopsidaceae</taxon>
        <taxon>Oltmannsiellopsis</taxon>
    </lineage>
</organism>
<accession>Q20EW6</accession>
<feature type="chain" id="PRO_0000275954" description="Photosystem I P700 chlorophyll a apoprotein A1">
    <location>
        <begin position="1"/>
        <end position="751"/>
    </location>
</feature>
<feature type="transmembrane region" description="Helical; Name=I" evidence="1">
    <location>
        <begin position="73"/>
        <end position="96"/>
    </location>
</feature>
<feature type="transmembrane region" description="Helical; Name=II" evidence="1">
    <location>
        <begin position="159"/>
        <end position="182"/>
    </location>
</feature>
<feature type="transmembrane region" description="Helical; Name=III" evidence="1">
    <location>
        <begin position="198"/>
        <end position="222"/>
    </location>
</feature>
<feature type="transmembrane region" description="Helical; Name=IV" evidence="1">
    <location>
        <begin position="294"/>
        <end position="312"/>
    </location>
</feature>
<feature type="transmembrane region" description="Helical; Name=V" evidence="1">
    <location>
        <begin position="349"/>
        <end position="372"/>
    </location>
</feature>
<feature type="transmembrane region" description="Helical; Name=VI" evidence="1">
    <location>
        <begin position="388"/>
        <end position="414"/>
    </location>
</feature>
<feature type="transmembrane region" description="Helical; Name=VII" evidence="1">
    <location>
        <begin position="436"/>
        <end position="458"/>
    </location>
</feature>
<feature type="transmembrane region" description="Helical; Name=VIII" evidence="1">
    <location>
        <begin position="533"/>
        <end position="551"/>
    </location>
</feature>
<feature type="transmembrane region" description="Helical; Name=IX" evidence="1">
    <location>
        <begin position="591"/>
        <end position="612"/>
    </location>
</feature>
<feature type="transmembrane region" description="Helical; Name=X" evidence="1">
    <location>
        <begin position="665"/>
        <end position="687"/>
    </location>
</feature>
<feature type="transmembrane region" description="Helical; Name=XI" evidence="1">
    <location>
        <begin position="725"/>
        <end position="745"/>
    </location>
</feature>
<feature type="binding site" evidence="1">
    <location>
        <position position="575"/>
    </location>
    <ligand>
        <name>[4Fe-4S] cluster</name>
        <dbReference type="ChEBI" id="CHEBI:49883"/>
        <note>ligand shared between dimeric partners</note>
    </ligand>
</feature>
<feature type="binding site" evidence="1">
    <location>
        <position position="584"/>
    </location>
    <ligand>
        <name>[4Fe-4S] cluster</name>
        <dbReference type="ChEBI" id="CHEBI:49883"/>
        <note>ligand shared between dimeric partners</note>
    </ligand>
</feature>
<feature type="binding site" description="axial binding residue" evidence="1">
    <location>
        <position position="676"/>
    </location>
    <ligand>
        <name>chlorophyll a'</name>
        <dbReference type="ChEBI" id="CHEBI:189419"/>
        <label>A1</label>
    </ligand>
    <ligandPart>
        <name>Mg</name>
        <dbReference type="ChEBI" id="CHEBI:25107"/>
    </ligandPart>
</feature>
<feature type="binding site" description="axial binding residue" evidence="1">
    <location>
        <position position="684"/>
    </location>
    <ligand>
        <name>chlorophyll a</name>
        <dbReference type="ChEBI" id="CHEBI:58416"/>
        <label>A3</label>
    </ligand>
    <ligandPart>
        <name>Mg</name>
        <dbReference type="ChEBI" id="CHEBI:25107"/>
    </ligandPart>
</feature>
<feature type="binding site" evidence="1">
    <location>
        <position position="692"/>
    </location>
    <ligand>
        <name>chlorophyll a</name>
        <dbReference type="ChEBI" id="CHEBI:58416"/>
        <label>A3</label>
    </ligand>
</feature>
<feature type="binding site" evidence="1">
    <location>
        <position position="693"/>
    </location>
    <ligand>
        <name>phylloquinone</name>
        <dbReference type="ChEBI" id="CHEBI:18067"/>
        <label>A</label>
    </ligand>
</feature>